<reference key="1">
    <citation type="journal article" date="2009" name="PLoS Pathog.">
        <title>Genomic evidence for the evolution of Streptococcus equi: host restriction, increased virulence, and genetic exchange with human pathogens.</title>
        <authorList>
            <person name="Holden M.T.G."/>
            <person name="Heather Z."/>
            <person name="Paillot R."/>
            <person name="Steward K.F."/>
            <person name="Webb K."/>
            <person name="Ainslie F."/>
            <person name="Jourdan T."/>
            <person name="Bason N.C."/>
            <person name="Holroyd N.E."/>
            <person name="Mungall K."/>
            <person name="Quail M.A."/>
            <person name="Sanders M."/>
            <person name="Simmonds M."/>
            <person name="Willey D."/>
            <person name="Brooks K."/>
            <person name="Aanensen D.M."/>
            <person name="Spratt B.G."/>
            <person name="Jolley K.A."/>
            <person name="Maiden M.C.J."/>
            <person name="Kehoe M."/>
            <person name="Chanter N."/>
            <person name="Bentley S.D."/>
            <person name="Robinson C."/>
            <person name="Maskell D.J."/>
            <person name="Parkhill J."/>
            <person name="Waller A.S."/>
        </authorList>
    </citation>
    <scope>NUCLEOTIDE SEQUENCE [LARGE SCALE GENOMIC DNA]</scope>
    <source>
        <strain>4047</strain>
    </source>
</reference>
<organism>
    <name type="scientific">Streptococcus equi subsp. equi (strain 4047)</name>
    <dbReference type="NCBI Taxonomy" id="553482"/>
    <lineage>
        <taxon>Bacteria</taxon>
        <taxon>Bacillati</taxon>
        <taxon>Bacillota</taxon>
        <taxon>Bacilli</taxon>
        <taxon>Lactobacillales</taxon>
        <taxon>Streptococcaceae</taxon>
        <taxon>Streptococcus</taxon>
    </lineage>
</organism>
<feature type="chain" id="PRO_1000146917" description="Co-chaperonin GroES">
    <location>
        <begin position="1"/>
        <end position="95"/>
    </location>
</feature>
<gene>
    <name evidence="1" type="primary">groES</name>
    <name evidence="1" type="synonym">groS</name>
    <name type="ordered locus">SEQ_0210</name>
</gene>
<protein>
    <recommendedName>
        <fullName evidence="1">Co-chaperonin GroES</fullName>
    </recommendedName>
    <alternativeName>
        <fullName evidence="1">10 kDa chaperonin</fullName>
    </alternativeName>
    <alternativeName>
        <fullName evidence="1">Chaperonin-10</fullName>
        <shortName evidence="1">Cpn10</shortName>
    </alternativeName>
</protein>
<accession>C0M7S4</accession>
<keyword id="KW-0143">Chaperone</keyword>
<keyword id="KW-0963">Cytoplasm</keyword>
<comment type="function">
    <text evidence="1">Together with the chaperonin GroEL, plays an essential role in assisting protein folding. The GroEL-GroES system forms a nano-cage that allows encapsulation of the non-native substrate proteins and provides a physical environment optimized to promote and accelerate protein folding. GroES binds to the apical surface of the GroEL ring, thereby capping the opening of the GroEL channel.</text>
</comment>
<comment type="subunit">
    <text evidence="1">Heptamer of 7 subunits arranged in a ring. Interacts with the chaperonin GroEL.</text>
</comment>
<comment type="subcellular location">
    <subcellularLocation>
        <location evidence="1">Cytoplasm</location>
    </subcellularLocation>
</comment>
<comment type="similarity">
    <text evidence="1">Belongs to the GroES chaperonin family.</text>
</comment>
<sequence length="95" mass="9949">MLKPLGDRVVLKFEAEKEQTVGGFVLAASHKEATKVGTVVAVSETGIRTITGDIVPPSVAVGDKVLVEYGSGLEVKDGDQELVICREADILAVLA</sequence>
<dbReference type="EMBL" id="FM204883">
    <property type="protein sequence ID" value="CAW92233.1"/>
    <property type="molecule type" value="Genomic_DNA"/>
</dbReference>
<dbReference type="RefSeq" id="WP_012514806.1">
    <property type="nucleotide sequence ID" value="NC_012471.1"/>
</dbReference>
<dbReference type="SMR" id="C0M7S4"/>
<dbReference type="GeneID" id="83704009"/>
<dbReference type="KEGG" id="seu:SEQ_0210"/>
<dbReference type="HOGENOM" id="CLU_132825_1_2_9"/>
<dbReference type="OrthoDB" id="9806791at2"/>
<dbReference type="Proteomes" id="UP000001365">
    <property type="component" value="Chromosome"/>
</dbReference>
<dbReference type="GO" id="GO:0005737">
    <property type="term" value="C:cytoplasm"/>
    <property type="evidence" value="ECO:0007669"/>
    <property type="project" value="UniProtKB-SubCell"/>
</dbReference>
<dbReference type="GO" id="GO:0005524">
    <property type="term" value="F:ATP binding"/>
    <property type="evidence" value="ECO:0007669"/>
    <property type="project" value="InterPro"/>
</dbReference>
<dbReference type="GO" id="GO:0046872">
    <property type="term" value="F:metal ion binding"/>
    <property type="evidence" value="ECO:0007669"/>
    <property type="project" value="TreeGrafter"/>
</dbReference>
<dbReference type="GO" id="GO:0044183">
    <property type="term" value="F:protein folding chaperone"/>
    <property type="evidence" value="ECO:0007669"/>
    <property type="project" value="InterPro"/>
</dbReference>
<dbReference type="GO" id="GO:0051087">
    <property type="term" value="F:protein-folding chaperone binding"/>
    <property type="evidence" value="ECO:0007669"/>
    <property type="project" value="TreeGrafter"/>
</dbReference>
<dbReference type="GO" id="GO:0051082">
    <property type="term" value="F:unfolded protein binding"/>
    <property type="evidence" value="ECO:0007669"/>
    <property type="project" value="TreeGrafter"/>
</dbReference>
<dbReference type="GO" id="GO:0051085">
    <property type="term" value="P:chaperone cofactor-dependent protein refolding"/>
    <property type="evidence" value="ECO:0007669"/>
    <property type="project" value="TreeGrafter"/>
</dbReference>
<dbReference type="CDD" id="cd00320">
    <property type="entry name" value="cpn10"/>
    <property type="match status" value="1"/>
</dbReference>
<dbReference type="FunFam" id="2.30.33.40:FF:000001">
    <property type="entry name" value="10 kDa chaperonin"/>
    <property type="match status" value="1"/>
</dbReference>
<dbReference type="Gene3D" id="2.30.33.40">
    <property type="entry name" value="GroES chaperonin"/>
    <property type="match status" value="1"/>
</dbReference>
<dbReference type="HAMAP" id="MF_00580">
    <property type="entry name" value="CH10"/>
    <property type="match status" value="1"/>
</dbReference>
<dbReference type="InterPro" id="IPR020818">
    <property type="entry name" value="Chaperonin_GroES"/>
</dbReference>
<dbReference type="InterPro" id="IPR037124">
    <property type="entry name" value="Chaperonin_GroES_sf"/>
</dbReference>
<dbReference type="InterPro" id="IPR018369">
    <property type="entry name" value="Chaprnonin_Cpn10_CS"/>
</dbReference>
<dbReference type="InterPro" id="IPR011032">
    <property type="entry name" value="GroES-like_sf"/>
</dbReference>
<dbReference type="NCBIfam" id="NF001528">
    <property type="entry name" value="PRK00364.1-4"/>
    <property type="match status" value="1"/>
</dbReference>
<dbReference type="PANTHER" id="PTHR10772">
    <property type="entry name" value="10 KDA HEAT SHOCK PROTEIN"/>
    <property type="match status" value="1"/>
</dbReference>
<dbReference type="PANTHER" id="PTHR10772:SF58">
    <property type="entry name" value="CO-CHAPERONIN GROES"/>
    <property type="match status" value="1"/>
</dbReference>
<dbReference type="Pfam" id="PF00166">
    <property type="entry name" value="Cpn10"/>
    <property type="match status" value="1"/>
</dbReference>
<dbReference type="PRINTS" id="PR00297">
    <property type="entry name" value="CHAPERONIN10"/>
</dbReference>
<dbReference type="SMART" id="SM00883">
    <property type="entry name" value="Cpn10"/>
    <property type="match status" value="1"/>
</dbReference>
<dbReference type="SUPFAM" id="SSF50129">
    <property type="entry name" value="GroES-like"/>
    <property type="match status" value="1"/>
</dbReference>
<dbReference type="PROSITE" id="PS00681">
    <property type="entry name" value="CHAPERONINS_CPN10"/>
    <property type="match status" value="1"/>
</dbReference>
<name>CH10_STRE4</name>
<proteinExistence type="inferred from homology"/>
<evidence type="ECO:0000255" key="1">
    <source>
        <dbReference type="HAMAP-Rule" id="MF_00580"/>
    </source>
</evidence>